<reference key="1">
    <citation type="journal article" date="1999" name="FEBS Lett.">
        <title>Crocalbin: a new calcium-binding protein that is also a binding protein for crotoxin, a neurotoxic phospholipase A2.</title>
        <authorList>
            <person name="Hseu M.-J."/>
            <person name="Yen C.-H."/>
            <person name="Tzeng M.-C."/>
        </authorList>
    </citation>
    <scope>NUCLEOTIDE SEQUENCE [MRNA]</scope>
    <scope>PARTIAL PROTEIN SEQUENCE</scope>
    <source>
        <strain>Sprague-Dawley</strain>
        <tissue>Brain</tissue>
    </source>
</reference>
<reference key="2">
    <citation type="journal article" date="2004" name="J. Biol. Chem.">
        <title>The inhibitory effect of calumenin on the vitamin K-dependent gamma-carboxylation system. Characterization of the system in normal and warfarin-resistant rats.</title>
        <authorList>
            <person name="Wajih N."/>
            <person name="Sane D.C."/>
            <person name="Hutson S.M."/>
            <person name="Wallin R."/>
        </authorList>
    </citation>
    <scope>FUNCTION</scope>
    <scope>INTERACTION WITH GGCX</scope>
</reference>
<feature type="signal peptide" evidence="1">
    <location>
        <begin position="1"/>
        <end position="19"/>
    </location>
</feature>
<feature type="chain" id="PRO_0000004155" description="Calumenin">
    <location>
        <begin position="20"/>
        <end position="315"/>
    </location>
</feature>
<feature type="domain" description="EF-hand 1" evidence="4">
    <location>
        <begin position="68"/>
        <end position="103"/>
    </location>
</feature>
<feature type="domain" description="EF-hand 2" evidence="4">
    <location>
        <begin position="104"/>
        <end position="139"/>
    </location>
</feature>
<feature type="domain" description="EF-hand 3" evidence="4">
    <location>
        <begin position="151"/>
        <end position="186"/>
    </location>
</feature>
<feature type="domain" description="EF-hand 4" evidence="4">
    <location>
        <begin position="188"/>
        <end position="223"/>
    </location>
</feature>
<feature type="domain" description="EF-hand 5" evidence="4">
    <location>
        <begin position="229"/>
        <end position="264"/>
    </location>
</feature>
<feature type="domain" description="EF-hand 6" evidence="4">
    <location>
        <begin position="265"/>
        <end position="300"/>
    </location>
</feature>
<feature type="short sequence motif" description="Prevents secretion from ER" evidence="1">
    <location>
        <begin position="312"/>
        <end position="315"/>
    </location>
</feature>
<feature type="binding site" evidence="4">
    <location>
        <position position="81"/>
    </location>
    <ligand>
        <name>Ca(2+)</name>
        <dbReference type="ChEBI" id="CHEBI:29108"/>
        <label>1</label>
    </ligand>
</feature>
<feature type="binding site" evidence="4">
    <location>
        <position position="83"/>
    </location>
    <ligand>
        <name>Ca(2+)</name>
        <dbReference type="ChEBI" id="CHEBI:29108"/>
        <label>1</label>
    </ligand>
</feature>
<feature type="binding site" evidence="4">
    <location>
        <position position="85"/>
    </location>
    <ligand>
        <name>Ca(2+)</name>
        <dbReference type="ChEBI" id="CHEBI:29108"/>
        <label>1</label>
    </ligand>
</feature>
<feature type="binding site" evidence="4">
    <location>
        <position position="92"/>
    </location>
    <ligand>
        <name>Ca(2+)</name>
        <dbReference type="ChEBI" id="CHEBI:29108"/>
        <label>1</label>
    </ligand>
</feature>
<feature type="binding site" evidence="4">
    <location>
        <position position="117"/>
    </location>
    <ligand>
        <name>Ca(2+)</name>
        <dbReference type="ChEBI" id="CHEBI:29108"/>
        <label>2</label>
    </ligand>
</feature>
<feature type="binding site" evidence="4">
    <location>
        <position position="119"/>
    </location>
    <ligand>
        <name>Ca(2+)</name>
        <dbReference type="ChEBI" id="CHEBI:29108"/>
        <label>2</label>
    </ligand>
</feature>
<feature type="binding site" evidence="4">
    <location>
        <position position="121"/>
    </location>
    <ligand>
        <name>Ca(2+)</name>
        <dbReference type="ChEBI" id="CHEBI:29108"/>
        <label>2</label>
    </ligand>
</feature>
<feature type="binding site" evidence="4">
    <location>
        <position position="128"/>
    </location>
    <ligand>
        <name>Ca(2+)</name>
        <dbReference type="ChEBI" id="CHEBI:29108"/>
        <label>2</label>
    </ligand>
</feature>
<feature type="binding site" evidence="6">
    <location>
        <position position="164"/>
    </location>
    <ligand>
        <name>Ca(2+)</name>
        <dbReference type="ChEBI" id="CHEBI:29108"/>
        <label>3</label>
    </ligand>
</feature>
<feature type="binding site" evidence="6">
    <location>
        <position position="166"/>
    </location>
    <ligand>
        <name>Ca(2+)</name>
        <dbReference type="ChEBI" id="CHEBI:29108"/>
        <label>3</label>
    </ligand>
</feature>
<feature type="binding site" evidence="6">
    <location>
        <position position="168"/>
    </location>
    <ligand>
        <name>Ca(2+)</name>
        <dbReference type="ChEBI" id="CHEBI:29108"/>
        <label>3</label>
    </ligand>
</feature>
<feature type="binding site" evidence="6">
    <location>
        <position position="175"/>
    </location>
    <ligand>
        <name>Ca(2+)</name>
        <dbReference type="ChEBI" id="CHEBI:29108"/>
        <label>3</label>
    </ligand>
</feature>
<feature type="binding site" evidence="4">
    <location>
        <position position="201"/>
    </location>
    <ligand>
        <name>Ca(2+)</name>
        <dbReference type="ChEBI" id="CHEBI:29108"/>
        <label>4</label>
    </ligand>
</feature>
<feature type="binding site" evidence="4">
    <location>
        <position position="203"/>
    </location>
    <ligand>
        <name>Ca(2+)</name>
        <dbReference type="ChEBI" id="CHEBI:29108"/>
        <label>4</label>
    </ligand>
</feature>
<feature type="binding site" evidence="4">
    <location>
        <position position="205"/>
    </location>
    <ligand>
        <name>Ca(2+)</name>
        <dbReference type="ChEBI" id="CHEBI:29108"/>
        <label>4</label>
    </ligand>
</feature>
<feature type="binding site" evidence="4">
    <location>
        <position position="212"/>
    </location>
    <ligand>
        <name>Ca(2+)</name>
        <dbReference type="ChEBI" id="CHEBI:29108"/>
        <label>4</label>
    </ligand>
</feature>
<feature type="binding site" evidence="6">
    <location>
        <position position="242"/>
    </location>
    <ligand>
        <name>Ca(2+)</name>
        <dbReference type="ChEBI" id="CHEBI:29108"/>
        <label>5</label>
    </ligand>
</feature>
<feature type="binding site" evidence="6">
    <location>
        <position position="244"/>
    </location>
    <ligand>
        <name>Ca(2+)</name>
        <dbReference type="ChEBI" id="CHEBI:29108"/>
        <label>5</label>
    </ligand>
</feature>
<feature type="binding site" evidence="6">
    <location>
        <position position="246"/>
    </location>
    <ligand>
        <name>Ca(2+)</name>
        <dbReference type="ChEBI" id="CHEBI:29108"/>
        <label>5</label>
    </ligand>
</feature>
<feature type="binding site" evidence="6">
    <location>
        <position position="248"/>
    </location>
    <ligand>
        <name>Ca(2+)</name>
        <dbReference type="ChEBI" id="CHEBI:29108"/>
        <label>5</label>
    </ligand>
</feature>
<feature type="binding site" evidence="6">
    <location>
        <position position="253"/>
    </location>
    <ligand>
        <name>Ca(2+)</name>
        <dbReference type="ChEBI" id="CHEBI:29108"/>
        <label>5</label>
    </ligand>
</feature>
<feature type="binding site" evidence="4">
    <location>
        <position position="278"/>
    </location>
    <ligand>
        <name>Ca(2+)</name>
        <dbReference type="ChEBI" id="CHEBI:29108"/>
        <label>6</label>
    </ligand>
</feature>
<feature type="binding site" evidence="4">
    <location>
        <position position="280"/>
    </location>
    <ligand>
        <name>Ca(2+)</name>
        <dbReference type="ChEBI" id="CHEBI:29108"/>
        <label>6</label>
    </ligand>
</feature>
<feature type="binding site" evidence="4">
    <location>
        <position position="282"/>
    </location>
    <ligand>
        <name>Ca(2+)</name>
        <dbReference type="ChEBI" id="CHEBI:29108"/>
        <label>6</label>
    </ligand>
</feature>
<feature type="binding site" evidence="4">
    <location>
        <position position="284"/>
    </location>
    <ligand>
        <name>Ca(2+)</name>
        <dbReference type="ChEBI" id="CHEBI:29108"/>
        <label>6</label>
    </ligand>
</feature>
<feature type="binding site" evidence="4">
    <location>
        <position position="289"/>
    </location>
    <ligand>
        <name>Ca(2+)</name>
        <dbReference type="ChEBI" id="CHEBI:29108"/>
        <label>6</label>
    </ligand>
</feature>
<feature type="modified residue" description="Phosphotyrosine" evidence="2">
    <location>
        <position position="47"/>
    </location>
</feature>
<feature type="modified residue" description="Phosphothreonine" evidence="2">
    <location>
        <position position="65"/>
    </location>
</feature>
<feature type="modified residue" description="Phosphoserine" evidence="2">
    <location>
        <position position="69"/>
    </location>
</feature>
<feature type="modified residue" description="Phosphothreonine" evidence="2">
    <location>
        <position position="254"/>
    </location>
</feature>
<feature type="modified residue" description="Phosphoserine" evidence="2">
    <location>
        <position position="261"/>
    </location>
</feature>
<feature type="modified residue" description="Phosphoserine" evidence="2">
    <location>
        <position position="277"/>
    </location>
</feature>
<feature type="glycosylation site" description="N-linked (GlcNAc...) asparagine" evidence="3">
    <location>
        <position position="131"/>
    </location>
</feature>
<comment type="function">
    <text evidence="1 5">Involved in regulation of vitamin K-dependent carboxylation of multiple N-terminal glutamate residues. Seems to inhibit gamma-carboxylase GGCX. Binds 7 calcium ions with a low affinity (By similarity).</text>
</comment>
<comment type="subunit">
    <text evidence="5">Binds crotoxin. Interacts with GGCX.</text>
</comment>
<comment type="subcellular location">
    <subcellularLocation>
        <location evidence="2">Endoplasmic reticulum membrane</location>
    </subcellularLocation>
    <subcellularLocation>
        <location evidence="2">Golgi apparatus</location>
    </subcellularLocation>
    <subcellularLocation>
        <location evidence="2">Secreted</location>
    </subcellularLocation>
    <subcellularLocation>
        <location evidence="2">Melanosome</location>
    </subcellularLocation>
    <subcellularLocation>
        <location evidence="2">Sarcoplasmic reticulum lumen</location>
    </subcellularLocation>
</comment>
<comment type="similarity">
    <text evidence="6">Belongs to the CREC family.</text>
</comment>
<accession>O35783</accession>
<evidence type="ECO:0000250" key="1"/>
<evidence type="ECO:0000250" key="2">
    <source>
        <dbReference type="UniProtKB" id="O43852"/>
    </source>
</evidence>
<evidence type="ECO:0000255" key="3"/>
<evidence type="ECO:0000255" key="4">
    <source>
        <dbReference type="PROSITE-ProRule" id="PRU00448"/>
    </source>
</evidence>
<evidence type="ECO:0000269" key="5">
    <source>
    </source>
</evidence>
<evidence type="ECO:0000305" key="6"/>
<organism>
    <name type="scientific">Rattus norvegicus</name>
    <name type="common">Rat</name>
    <dbReference type="NCBI Taxonomy" id="10116"/>
    <lineage>
        <taxon>Eukaryota</taxon>
        <taxon>Metazoa</taxon>
        <taxon>Chordata</taxon>
        <taxon>Craniata</taxon>
        <taxon>Vertebrata</taxon>
        <taxon>Euteleostomi</taxon>
        <taxon>Mammalia</taxon>
        <taxon>Eutheria</taxon>
        <taxon>Euarchontoglires</taxon>
        <taxon>Glires</taxon>
        <taxon>Rodentia</taxon>
        <taxon>Myomorpha</taxon>
        <taxon>Muroidea</taxon>
        <taxon>Muridae</taxon>
        <taxon>Murinae</taxon>
        <taxon>Rattus</taxon>
    </lineage>
</organism>
<name>CALU_RAT</name>
<sequence>MDLRQFLMCLSLCTAFALSKPTEKKDRVHHEPQLSDKVHNDAQNFDYDHDAFLGAEEAKSFGQLTPEESKEKLGMIVDKIDTDKDGFVTEGELKSRIKHAQKKYIYDNVENQWQEFDMNQDGLISWDEYRNVTYGTYLDDPDPDDGFNYKPIMVRDERRFKMADQDGDLIATKEEFTAFLHPEEYDYMKDIVLQETMEDIDQNADGFIDLEEYIGDMYSHDGNADEPQWVKTEREQFVEFRDKNRDGKMDKEETKDWILPSDYDHAEAEARHLVYESDQDKDGKLTKEEIVDKYDLFVGSQATDFGEALVRHDEF</sequence>
<proteinExistence type="evidence at protein level"/>
<protein>
    <recommendedName>
        <fullName>Calumenin</fullName>
    </recommendedName>
    <alternativeName>
        <fullName>CBP-50</fullName>
    </alternativeName>
    <alternativeName>
        <fullName>Crocalbin</fullName>
    </alternativeName>
</protein>
<dbReference type="EMBL" id="AJ001929">
    <property type="protein sequence ID" value="CAA05100.1"/>
    <property type="molecule type" value="mRNA"/>
</dbReference>
<dbReference type="FunCoup" id="O35783">
    <property type="interactions" value="3050"/>
</dbReference>
<dbReference type="STRING" id="10116.ENSRNOP00000008356"/>
<dbReference type="GlyCosmos" id="O35783">
    <property type="glycosylation" value="1 site, No reported glycans"/>
</dbReference>
<dbReference type="GlyGen" id="O35783">
    <property type="glycosylation" value="1 site"/>
</dbReference>
<dbReference type="iPTMnet" id="O35783"/>
<dbReference type="PhosphoSitePlus" id="O35783"/>
<dbReference type="jPOST" id="O35783"/>
<dbReference type="UCSC" id="RGD:620383">
    <property type="organism name" value="rat"/>
</dbReference>
<dbReference type="AGR" id="RGD:620383"/>
<dbReference type="RGD" id="620383">
    <property type="gene designation" value="Calu"/>
</dbReference>
<dbReference type="InParanoid" id="O35783"/>
<dbReference type="PhylomeDB" id="O35783"/>
<dbReference type="PRO" id="PR:O35783"/>
<dbReference type="Proteomes" id="UP000002494">
    <property type="component" value="Unplaced"/>
</dbReference>
<dbReference type="GO" id="GO:0005783">
    <property type="term" value="C:endoplasmic reticulum"/>
    <property type="evidence" value="ECO:0000266"/>
    <property type="project" value="RGD"/>
</dbReference>
<dbReference type="GO" id="GO:0005788">
    <property type="term" value="C:endoplasmic reticulum lumen"/>
    <property type="evidence" value="ECO:0000314"/>
    <property type="project" value="RGD"/>
</dbReference>
<dbReference type="GO" id="GO:0005789">
    <property type="term" value="C:endoplasmic reticulum membrane"/>
    <property type="evidence" value="ECO:0000250"/>
    <property type="project" value="UniProtKB"/>
</dbReference>
<dbReference type="GO" id="GO:0005576">
    <property type="term" value="C:extracellular region"/>
    <property type="evidence" value="ECO:0000250"/>
    <property type="project" value="UniProtKB"/>
</dbReference>
<dbReference type="GO" id="GO:0005794">
    <property type="term" value="C:Golgi apparatus"/>
    <property type="evidence" value="ECO:0000250"/>
    <property type="project" value="UniProtKB"/>
</dbReference>
<dbReference type="GO" id="GO:0042470">
    <property type="term" value="C:melanosome"/>
    <property type="evidence" value="ECO:0007669"/>
    <property type="project" value="UniProtKB-SubCell"/>
</dbReference>
<dbReference type="GO" id="GO:0033018">
    <property type="term" value="C:sarcoplasmic reticulum lumen"/>
    <property type="evidence" value="ECO:0007669"/>
    <property type="project" value="UniProtKB-SubCell"/>
</dbReference>
<dbReference type="GO" id="GO:0005509">
    <property type="term" value="F:calcium ion binding"/>
    <property type="evidence" value="ECO:0000314"/>
    <property type="project" value="RGD"/>
</dbReference>
<dbReference type="GO" id="GO:0019899">
    <property type="term" value="F:enzyme binding"/>
    <property type="evidence" value="ECO:0000314"/>
    <property type="project" value="RGD"/>
</dbReference>
<dbReference type="GO" id="GO:0004857">
    <property type="term" value="F:enzyme inhibitor activity"/>
    <property type="evidence" value="ECO:0000314"/>
    <property type="project" value="RGD"/>
</dbReference>
<dbReference type="GO" id="GO:0014012">
    <property type="term" value="P:peripheral nervous system axon regeneration"/>
    <property type="evidence" value="ECO:0000270"/>
    <property type="project" value="RGD"/>
</dbReference>
<dbReference type="FunFam" id="1.10.238.10:FF:000090">
    <property type="entry name" value="calumenin isoform X2"/>
    <property type="match status" value="1"/>
</dbReference>
<dbReference type="FunFam" id="1.10.238.10:FF:000109">
    <property type="entry name" value="calumenin isoform X2"/>
    <property type="match status" value="1"/>
</dbReference>
<dbReference type="FunFam" id="1.10.238.10:FF:000110">
    <property type="entry name" value="calumenin isoform X2"/>
    <property type="match status" value="1"/>
</dbReference>
<dbReference type="Gene3D" id="1.10.238.10">
    <property type="entry name" value="EF-hand"/>
    <property type="match status" value="3"/>
</dbReference>
<dbReference type="InterPro" id="IPR011992">
    <property type="entry name" value="EF-hand-dom_pair"/>
</dbReference>
<dbReference type="InterPro" id="IPR018247">
    <property type="entry name" value="EF_Hand_1_Ca_BS"/>
</dbReference>
<dbReference type="InterPro" id="IPR002048">
    <property type="entry name" value="EF_hand_dom"/>
</dbReference>
<dbReference type="PANTHER" id="PTHR10827:SF88">
    <property type="entry name" value="CALUMENIN"/>
    <property type="match status" value="1"/>
</dbReference>
<dbReference type="PANTHER" id="PTHR10827">
    <property type="entry name" value="RETICULOCALBIN"/>
    <property type="match status" value="1"/>
</dbReference>
<dbReference type="Pfam" id="PF13202">
    <property type="entry name" value="EF-hand_5"/>
    <property type="match status" value="1"/>
</dbReference>
<dbReference type="Pfam" id="PF13499">
    <property type="entry name" value="EF-hand_7"/>
    <property type="match status" value="1"/>
</dbReference>
<dbReference type="Pfam" id="PF13833">
    <property type="entry name" value="EF-hand_8"/>
    <property type="match status" value="1"/>
</dbReference>
<dbReference type="SMART" id="SM00054">
    <property type="entry name" value="EFh"/>
    <property type="match status" value="4"/>
</dbReference>
<dbReference type="SUPFAM" id="SSF47473">
    <property type="entry name" value="EF-hand"/>
    <property type="match status" value="2"/>
</dbReference>
<dbReference type="PROSITE" id="PS00018">
    <property type="entry name" value="EF_HAND_1"/>
    <property type="match status" value="4"/>
</dbReference>
<dbReference type="PROSITE" id="PS50222">
    <property type="entry name" value="EF_HAND_2"/>
    <property type="match status" value="6"/>
</dbReference>
<gene>
    <name type="primary">Calu</name>
</gene>
<keyword id="KW-0106">Calcium</keyword>
<keyword id="KW-0903">Direct protein sequencing</keyword>
<keyword id="KW-0256">Endoplasmic reticulum</keyword>
<keyword id="KW-0325">Glycoprotein</keyword>
<keyword id="KW-0333">Golgi apparatus</keyword>
<keyword id="KW-0472">Membrane</keyword>
<keyword id="KW-0479">Metal-binding</keyword>
<keyword id="KW-0597">Phosphoprotein</keyword>
<keyword id="KW-1185">Reference proteome</keyword>
<keyword id="KW-0677">Repeat</keyword>
<keyword id="KW-0703">Sarcoplasmic reticulum</keyword>
<keyword id="KW-0964">Secreted</keyword>
<keyword id="KW-0732">Signal</keyword>